<gene>
    <name evidence="1" type="primary">hisH</name>
    <name type="ordered locus">MK1510</name>
</gene>
<comment type="function">
    <text evidence="1">IGPS catalyzes the conversion of PRFAR and glutamine to IGP, AICAR and glutamate. The HisH subunit catalyzes the hydrolysis of glutamine to glutamate and ammonia as part of the synthesis of IGP and AICAR. The resulting ammonia molecule is channeled to the active site of HisF.</text>
</comment>
<comment type="catalytic activity">
    <reaction evidence="1">
        <text>5-[(5-phospho-1-deoxy-D-ribulos-1-ylimino)methylamino]-1-(5-phospho-beta-D-ribosyl)imidazole-4-carboxamide + L-glutamine = D-erythro-1-(imidazol-4-yl)glycerol 3-phosphate + 5-amino-1-(5-phospho-beta-D-ribosyl)imidazole-4-carboxamide + L-glutamate + H(+)</text>
        <dbReference type="Rhea" id="RHEA:24793"/>
        <dbReference type="ChEBI" id="CHEBI:15378"/>
        <dbReference type="ChEBI" id="CHEBI:29985"/>
        <dbReference type="ChEBI" id="CHEBI:58278"/>
        <dbReference type="ChEBI" id="CHEBI:58359"/>
        <dbReference type="ChEBI" id="CHEBI:58475"/>
        <dbReference type="ChEBI" id="CHEBI:58525"/>
        <dbReference type="EC" id="4.3.2.10"/>
    </reaction>
</comment>
<comment type="catalytic activity">
    <reaction evidence="1">
        <text>L-glutamine + H2O = L-glutamate + NH4(+)</text>
        <dbReference type="Rhea" id="RHEA:15889"/>
        <dbReference type="ChEBI" id="CHEBI:15377"/>
        <dbReference type="ChEBI" id="CHEBI:28938"/>
        <dbReference type="ChEBI" id="CHEBI:29985"/>
        <dbReference type="ChEBI" id="CHEBI:58359"/>
        <dbReference type="EC" id="3.5.1.2"/>
    </reaction>
</comment>
<comment type="pathway">
    <text evidence="1">Amino-acid biosynthesis; L-histidine biosynthesis; L-histidine from 5-phospho-alpha-D-ribose 1-diphosphate: step 5/9.</text>
</comment>
<comment type="subunit">
    <text evidence="1">Heterodimer of HisH and HisF.</text>
</comment>
<comment type="subcellular location">
    <subcellularLocation>
        <location evidence="1">Cytoplasm</location>
    </subcellularLocation>
</comment>
<sequence>MKVAIVEYGVGNLNSVYRAVKHLGHEPVVTDDPSELHDADAVILPGVGNFRAAAEKLEETGLCDEIRELLGSVPLLGICLGMQLLMESSEESPESRGLGVFRGTCVALPNDVKTPHMGWNTVEFRTEEFREFDGEMFYFVHSYRVAPEDDVVLGETEYGERFPSVIGDRGRLIYGMQFHPEKSGPVGLKLLGEVLTGASR</sequence>
<accession>Q8TV83</accession>
<feature type="chain" id="PRO_0000152459" description="Imidazole glycerol phosphate synthase subunit HisH">
    <location>
        <begin position="1"/>
        <end position="200"/>
    </location>
</feature>
<feature type="domain" description="Glutamine amidotransferase type-1" evidence="1">
    <location>
        <begin position="2"/>
        <end position="200"/>
    </location>
</feature>
<feature type="active site" description="Nucleophile" evidence="1">
    <location>
        <position position="79"/>
    </location>
</feature>
<feature type="active site" evidence="1">
    <location>
        <position position="179"/>
    </location>
</feature>
<feature type="active site" evidence="1">
    <location>
        <position position="181"/>
    </location>
</feature>
<name>HIS5_METKA</name>
<dbReference type="EC" id="4.3.2.10" evidence="1"/>
<dbReference type="EC" id="3.5.1.2" evidence="1"/>
<dbReference type="EMBL" id="AE009439">
    <property type="protein sequence ID" value="AAM02723.1"/>
    <property type="molecule type" value="Genomic_DNA"/>
</dbReference>
<dbReference type="SMR" id="Q8TV83"/>
<dbReference type="FunCoup" id="Q8TV83">
    <property type="interactions" value="73"/>
</dbReference>
<dbReference type="STRING" id="190192.MK1510"/>
<dbReference type="PaxDb" id="190192-MK1510"/>
<dbReference type="EnsemblBacteria" id="AAM02723">
    <property type="protein sequence ID" value="AAM02723"/>
    <property type="gene ID" value="MK1510"/>
</dbReference>
<dbReference type="KEGG" id="mka:MK1510"/>
<dbReference type="PATRIC" id="fig|190192.8.peg.1668"/>
<dbReference type="HOGENOM" id="CLU_071837_2_2_2"/>
<dbReference type="InParanoid" id="Q8TV83"/>
<dbReference type="UniPathway" id="UPA00031">
    <property type="reaction ID" value="UER00010"/>
</dbReference>
<dbReference type="Proteomes" id="UP000001826">
    <property type="component" value="Chromosome"/>
</dbReference>
<dbReference type="GO" id="GO:0005737">
    <property type="term" value="C:cytoplasm"/>
    <property type="evidence" value="ECO:0007669"/>
    <property type="project" value="UniProtKB-SubCell"/>
</dbReference>
<dbReference type="GO" id="GO:0004359">
    <property type="term" value="F:glutaminase activity"/>
    <property type="evidence" value="ECO:0007669"/>
    <property type="project" value="UniProtKB-EC"/>
</dbReference>
<dbReference type="GO" id="GO:0000107">
    <property type="term" value="F:imidazoleglycerol-phosphate synthase activity"/>
    <property type="evidence" value="ECO:0007669"/>
    <property type="project" value="UniProtKB-UniRule"/>
</dbReference>
<dbReference type="GO" id="GO:0016829">
    <property type="term" value="F:lyase activity"/>
    <property type="evidence" value="ECO:0007669"/>
    <property type="project" value="UniProtKB-KW"/>
</dbReference>
<dbReference type="GO" id="GO:0000105">
    <property type="term" value="P:L-histidine biosynthetic process"/>
    <property type="evidence" value="ECO:0007669"/>
    <property type="project" value="UniProtKB-UniRule"/>
</dbReference>
<dbReference type="CDD" id="cd01748">
    <property type="entry name" value="GATase1_IGP_Synthase"/>
    <property type="match status" value="1"/>
</dbReference>
<dbReference type="Gene3D" id="3.40.50.880">
    <property type="match status" value="1"/>
</dbReference>
<dbReference type="HAMAP" id="MF_00278">
    <property type="entry name" value="HisH"/>
    <property type="match status" value="1"/>
</dbReference>
<dbReference type="InterPro" id="IPR029062">
    <property type="entry name" value="Class_I_gatase-like"/>
</dbReference>
<dbReference type="InterPro" id="IPR017926">
    <property type="entry name" value="GATASE"/>
</dbReference>
<dbReference type="InterPro" id="IPR010139">
    <property type="entry name" value="Imidazole-glycPsynth_HisH"/>
</dbReference>
<dbReference type="NCBIfam" id="TIGR01855">
    <property type="entry name" value="IMP_synth_hisH"/>
    <property type="match status" value="1"/>
</dbReference>
<dbReference type="PANTHER" id="PTHR42701">
    <property type="entry name" value="IMIDAZOLE GLYCEROL PHOSPHATE SYNTHASE SUBUNIT HISH"/>
    <property type="match status" value="1"/>
</dbReference>
<dbReference type="PANTHER" id="PTHR42701:SF1">
    <property type="entry name" value="IMIDAZOLE GLYCEROL PHOSPHATE SYNTHASE SUBUNIT HISH"/>
    <property type="match status" value="1"/>
</dbReference>
<dbReference type="Pfam" id="PF00117">
    <property type="entry name" value="GATase"/>
    <property type="match status" value="1"/>
</dbReference>
<dbReference type="PIRSF" id="PIRSF000495">
    <property type="entry name" value="Amidotransf_hisH"/>
    <property type="match status" value="1"/>
</dbReference>
<dbReference type="SUPFAM" id="SSF52317">
    <property type="entry name" value="Class I glutamine amidotransferase-like"/>
    <property type="match status" value="1"/>
</dbReference>
<dbReference type="PROSITE" id="PS51273">
    <property type="entry name" value="GATASE_TYPE_1"/>
    <property type="match status" value="1"/>
</dbReference>
<evidence type="ECO:0000255" key="1">
    <source>
        <dbReference type="HAMAP-Rule" id="MF_00278"/>
    </source>
</evidence>
<proteinExistence type="inferred from homology"/>
<protein>
    <recommendedName>
        <fullName evidence="1">Imidazole glycerol phosphate synthase subunit HisH</fullName>
        <ecNumber evidence="1">4.3.2.10</ecNumber>
    </recommendedName>
    <alternativeName>
        <fullName evidence="1">IGP synthase glutaminase subunit</fullName>
        <ecNumber evidence="1">3.5.1.2</ecNumber>
    </alternativeName>
    <alternativeName>
        <fullName evidence="1">IGP synthase subunit HisH</fullName>
    </alternativeName>
    <alternativeName>
        <fullName evidence="1">ImGP synthase subunit HisH</fullName>
        <shortName evidence="1">IGPS subunit HisH</shortName>
    </alternativeName>
</protein>
<organism>
    <name type="scientific">Methanopyrus kandleri (strain AV19 / DSM 6324 / JCM 9639 / NBRC 100938)</name>
    <dbReference type="NCBI Taxonomy" id="190192"/>
    <lineage>
        <taxon>Archaea</taxon>
        <taxon>Methanobacteriati</taxon>
        <taxon>Methanobacteriota</taxon>
        <taxon>Methanomada group</taxon>
        <taxon>Methanopyri</taxon>
        <taxon>Methanopyrales</taxon>
        <taxon>Methanopyraceae</taxon>
        <taxon>Methanopyrus</taxon>
    </lineage>
</organism>
<keyword id="KW-0028">Amino-acid biosynthesis</keyword>
<keyword id="KW-0963">Cytoplasm</keyword>
<keyword id="KW-0315">Glutamine amidotransferase</keyword>
<keyword id="KW-0368">Histidine biosynthesis</keyword>
<keyword id="KW-0378">Hydrolase</keyword>
<keyword id="KW-0456">Lyase</keyword>
<keyword id="KW-1185">Reference proteome</keyword>
<reference key="1">
    <citation type="journal article" date="2002" name="Proc. Natl. Acad. Sci. U.S.A.">
        <title>The complete genome of hyperthermophile Methanopyrus kandleri AV19 and monophyly of archaeal methanogens.</title>
        <authorList>
            <person name="Slesarev A.I."/>
            <person name="Mezhevaya K.V."/>
            <person name="Makarova K.S."/>
            <person name="Polushin N.N."/>
            <person name="Shcherbinina O.V."/>
            <person name="Shakhova V.V."/>
            <person name="Belova G.I."/>
            <person name="Aravind L."/>
            <person name="Natale D.A."/>
            <person name="Rogozin I.B."/>
            <person name="Tatusov R.L."/>
            <person name="Wolf Y.I."/>
            <person name="Stetter K.O."/>
            <person name="Malykh A.G."/>
            <person name="Koonin E.V."/>
            <person name="Kozyavkin S.A."/>
        </authorList>
    </citation>
    <scope>NUCLEOTIDE SEQUENCE [LARGE SCALE GENOMIC DNA]</scope>
    <source>
        <strain>AV19 / DSM 6324 / JCM 9639 / NBRC 100938</strain>
    </source>
</reference>